<accession>B8E4W5</accession>
<protein>
    <recommendedName>
        <fullName evidence="1">Octanoyltransferase</fullName>
        <ecNumber evidence="1">2.3.1.181</ecNumber>
    </recommendedName>
    <alternativeName>
        <fullName evidence="1">Lipoate-protein ligase B</fullName>
    </alternativeName>
    <alternativeName>
        <fullName evidence="1">Lipoyl/octanoyl transferase</fullName>
    </alternativeName>
    <alternativeName>
        <fullName evidence="1">Octanoyl-[acyl-carrier-protein]-protein N-octanoyltransferase</fullName>
    </alternativeName>
</protein>
<dbReference type="EC" id="2.3.1.181" evidence="1"/>
<dbReference type="EMBL" id="CP001252">
    <property type="protein sequence ID" value="ACK45601.1"/>
    <property type="molecule type" value="Genomic_DNA"/>
</dbReference>
<dbReference type="RefSeq" id="WP_012587014.1">
    <property type="nucleotide sequence ID" value="NC_011663.1"/>
</dbReference>
<dbReference type="SMR" id="B8E4W5"/>
<dbReference type="KEGG" id="sbp:Sbal223_1086"/>
<dbReference type="HOGENOM" id="CLU_035168_3_1_6"/>
<dbReference type="UniPathway" id="UPA00538">
    <property type="reaction ID" value="UER00592"/>
</dbReference>
<dbReference type="Proteomes" id="UP000002507">
    <property type="component" value="Chromosome"/>
</dbReference>
<dbReference type="GO" id="GO:0005737">
    <property type="term" value="C:cytoplasm"/>
    <property type="evidence" value="ECO:0007669"/>
    <property type="project" value="UniProtKB-SubCell"/>
</dbReference>
<dbReference type="GO" id="GO:0033819">
    <property type="term" value="F:lipoyl(octanoyl) transferase activity"/>
    <property type="evidence" value="ECO:0007669"/>
    <property type="project" value="UniProtKB-EC"/>
</dbReference>
<dbReference type="GO" id="GO:0036211">
    <property type="term" value="P:protein modification process"/>
    <property type="evidence" value="ECO:0007669"/>
    <property type="project" value="InterPro"/>
</dbReference>
<dbReference type="CDD" id="cd16444">
    <property type="entry name" value="LipB"/>
    <property type="match status" value="1"/>
</dbReference>
<dbReference type="FunFam" id="3.30.930.10:FF:000020">
    <property type="entry name" value="Octanoyltransferase"/>
    <property type="match status" value="1"/>
</dbReference>
<dbReference type="Gene3D" id="3.30.930.10">
    <property type="entry name" value="Bira Bifunctional Protein, Domain 2"/>
    <property type="match status" value="1"/>
</dbReference>
<dbReference type="HAMAP" id="MF_00013">
    <property type="entry name" value="LipB"/>
    <property type="match status" value="1"/>
</dbReference>
<dbReference type="InterPro" id="IPR045864">
    <property type="entry name" value="aa-tRNA-synth_II/BPL/LPL"/>
</dbReference>
<dbReference type="InterPro" id="IPR004143">
    <property type="entry name" value="BPL_LPL_catalytic"/>
</dbReference>
<dbReference type="InterPro" id="IPR000544">
    <property type="entry name" value="Octanoyltransferase"/>
</dbReference>
<dbReference type="InterPro" id="IPR020605">
    <property type="entry name" value="Octanoyltransferase_CS"/>
</dbReference>
<dbReference type="NCBIfam" id="TIGR00214">
    <property type="entry name" value="lipB"/>
    <property type="match status" value="1"/>
</dbReference>
<dbReference type="NCBIfam" id="NF010922">
    <property type="entry name" value="PRK14342.1"/>
    <property type="match status" value="1"/>
</dbReference>
<dbReference type="PANTHER" id="PTHR10993:SF7">
    <property type="entry name" value="LIPOYLTRANSFERASE 2, MITOCHONDRIAL-RELATED"/>
    <property type="match status" value="1"/>
</dbReference>
<dbReference type="PANTHER" id="PTHR10993">
    <property type="entry name" value="OCTANOYLTRANSFERASE"/>
    <property type="match status" value="1"/>
</dbReference>
<dbReference type="Pfam" id="PF21948">
    <property type="entry name" value="LplA-B_cat"/>
    <property type="match status" value="1"/>
</dbReference>
<dbReference type="PIRSF" id="PIRSF016262">
    <property type="entry name" value="LPLase"/>
    <property type="match status" value="1"/>
</dbReference>
<dbReference type="SUPFAM" id="SSF55681">
    <property type="entry name" value="Class II aaRS and biotin synthetases"/>
    <property type="match status" value="1"/>
</dbReference>
<dbReference type="PROSITE" id="PS51733">
    <property type="entry name" value="BPL_LPL_CATALYTIC"/>
    <property type="match status" value="1"/>
</dbReference>
<dbReference type="PROSITE" id="PS01313">
    <property type="entry name" value="LIPB"/>
    <property type="match status" value="1"/>
</dbReference>
<name>LIPB_SHEB2</name>
<feature type="chain" id="PRO_1000116554" description="Octanoyltransferase">
    <location>
        <begin position="1"/>
        <end position="217"/>
    </location>
</feature>
<feature type="domain" description="BPL/LPL catalytic" evidence="2">
    <location>
        <begin position="32"/>
        <end position="207"/>
    </location>
</feature>
<feature type="active site" description="Acyl-thioester intermediate" evidence="1">
    <location>
        <position position="169"/>
    </location>
</feature>
<feature type="binding site" evidence="1">
    <location>
        <begin position="71"/>
        <end position="78"/>
    </location>
    <ligand>
        <name>substrate</name>
    </ligand>
</feature>
<feature type="binding site" evidence="1">
    <location>
        <begin position="138"/>
        <end position="140"/>
    </location>
    <ligand>
        <name>substrate</name>
    </ligand>
</feature>
<feature type="binding site" evidence="1">
    <location>
        <begin position="151"/>
        <end position="153"/>
    </location>
    <ligand>
        <name>substrate</name>
    </ligand>
</feature>
<feature type="site" description="Lowers pKa of active site Cys" evidence="1">
    <location>
        <position position="135"/>
    </location>
</feature>
<proteinExistence type="inferred from homology"/>
<evidence type="ECO:0000255" key="1">
    <source>
        <dbReference type="HAMAP-Rule" id="MF_00013"/>
    </source>
</evidence>
<evidence type="ECO:0000255" key="2">
    <source>
        <dbReference type="PROSITE-ProRule" id="PRU01067"/>
    </source>
</evidence>
<sequence length="217" mass="24071">MQDTTLHIRHLGKQDYESVWHAMQHYTDTRDSESHDELWIVEHPPVFTQGQAGKSEHILNAGDIPVIQVDRGGQVTYHGPGQLVVYPLLDIKRSKVGVRQLVTHIEQSIVDMLAKYDINAYAKADAPGVYVDERKIASLGLRIRKGCSFHGLALNVDMDLAPFRRINPCGYAGLEMAQCKALGGPQTVIEAGEQLTITFSQLLGYQHLVHHQGLAAS</sequence>
<reference key="1">
    <citation type="submission" date="2008-12" db="EMBL/GenBank/DDBJ databases">
        <title>Complete sequence of chromosome of Shewanella baltica OS223.</title>
        <authorList>
            <consortium name="US DOE Joint Genome Institute"/>
            <person name="Lucas S."/>
            <person name="Copeland A."/>
            <person name="Lapidus A."/>
            <person name="Glavina del Rio T."/>
            <person name="Dalin E."/>
            <person name="Tice H."/>
            <person name="Bruce D."/>
            <person name="Goodwin L."/>
            <person name="Pitluck S."/>
            <person name="Chertkov O."/>
            <person name="Meincke L."/>
            <person name="Brettin T."/>
            <person name="Detter J.C."/>
            <person name="Han C."/>
            <person name="Kuske C.R."/>
            <person name="Larimer F."/>
            <person name="Land M."/>
            <person name="Hauser L."/>
            <person name="Kyrpides N."/>
            <person name="Ovchinnikova G."/>
            <person name="Brettar I."/>
            <person name="Rodrigues J."/>
            <person name="Konstantinidis K."/>
            <person name="Tiedje J."/>
        </authorList>
    </citation>
    <scope>NUCLEOTIDE SEQUENCE [LARGE SCALE GENOMIC DNA]</scope>
    <source>
        <strain>OS223</strain>
    </source>
</reference>
<comment type="function">
    <text evidence="1">Catalyzes the transfer of endogenously produced octanoic acid from octanoyl-acyl-carrier-protein onto the lipoyl domains of lipoate-dependent enzymes. Lipoyl-ACP can also act as a substrate although octanoyl-ACP is likely to be the physiological substrate.</text>
</comment>
<comment type="catalytic activity">
    <reaction evidence="1">
        <text>octanoyl-[ACP] + L-lysyl-[protein] = N(6)-octanoyl-L-lysyl-[protein] + holo-[ACP] + H(+)</text>
        <dbReference type="Rhea" id="RHEA:17665"/>
        <dbReference type="Rhea" id="RHEA-COMP:9636"/>
        <dbReference type="Rhea" id="RHEA-COMP:9685"/>
        <dbReference type="Rhea" id="RHEA-COMP:9752"/>
        <dbReference type="Rhea" id="RHEA-COMP:9928"/>
        <dbReference type="ChEBI" id="CHEBI:15378"/>
        <dbReference type="ChEBI" id="CHEBI:29969"/>
        <dbReference type="ChEBI" id="CHEBI:64479"/>
        <dbReference type="ChEBI" id="CHEBI:78463"/>
        <dbReference type="ChEBI" id="CHEBI:78809"/>
        <dbReference type="EC" id="2.3.1.181"/>
    </reaction>
</comment>
<comment type="pathway">
    <text evidence="1">Protein modification; protein lipoylation via endogenous pathway; protein N(6)-(lipoyl)lysine from octanoyl-[acyl-carrier-protein]: step 1/2.</text>
</comment>
<comment type="subcellular location">
    <subcellularLocation>
        <location evidence="1">Cytoplasm</location>
    </subcellularLocation>
</comment>
<comment type="miscellaneous">
    <text evidence="1">In the reaction, the free carboxyl group of octanoic acid is attached via an amide linkage to the epsilon-amino group of a specific lysine residue of lipoyl domains of lipoate-dependent enzymes.</text>
</comment>
<comment type="similarity">
    <text evidence="1">Belongs to the LipB family.</text>
</comment>
<organism>
    <name type="scientific">Shewanella baltica (strain OS223)</name>
    <dbReference type="NCBI Taxonomy" id="407976"/>
    <lineage>
        <taxon>Bacteria</taxon>
        <taxon>Pseudomonadati</taxon>
        <taxon>Pseudomonadota</taxon>
        <taxon>Gammaproteobacteria</taxon>
        <taxon>Alteromonadales</taxon>
        <taxon>Shewanellaceae</taxon>
        <taxon>Shewanella</taxon>
    </lineage>
</organism>
<gene>
    <name evidence="1" type="primary">lipB</name>
    <name type="ordered locus">Sbal223_1086</name>
</gene>
<keyword id="KW-0012">Acyltransferase</keyword>
<keyword id="KW-0963">Cytoplasm</keyword>
<keyword id="KW-0808">Transferase</keyword>